<proteinExistence type="inferred from homology"/>
<reference key="1">
    <citation type="journal article" date="2005" name="Proc. Natl. Acad. Sci. U.S.A.">
        <title>The genome of the heartwater agent Ehrlichia ruminantium contains multiple tandem repeats of actively variable copy number.</title>
        <authorList>
            <person name="Collins N.E."/>
            <person name="Liebenberg J."/>
            <person name="de Villiers E.P."/>
            <person name="Brayton K.A."/>
            <person name="Louw E."/>
            <person name="Pretorius A."/>
            <person name="Faber F.E."/>
            <person name="van Heerden H."/>
            <person name="Josemans A."/>
            <person name="van Kleef M."/>
            <person name="Steyn H.C."/>
            <person name="van Strijp M.F."/>
            <person name="Zweygarth E."/>
            <person name="Jongejan F."/>
            <person name="Maillard J.C."/>
            <person name="Berthier D."/>
            <person name="Botha M."/>
            <person name="Joubert F."/>
            <person name="Corton C.H."/>
            <person name="Thomson N.R."/>
            <person name="Allsopp M.T."/>
            <person name="Allsopp B.A."/>
        </authorList>
    </citation>
    <scope>NUCLEOTIDE SEQUENCE [LARGE SCALE GENOMIC DNA]</scope>
    <source>
        <strain>Welgevonden</strain>
    </source>
</reference>
<reference key="2">
    <citation type="journal article" date="2006" name="J. Bacteriol.">
        <title>Comparative genomic analysis of three strains of Ehrlichia ruminantium reveals an active process of genome size plasticity.</title>
        <authorList>
            <person name="Frutos R."/>
            <person name="Viari A."/>
            <person name="Ferraz C."/>
            <person name="Morgat A."/>
            <person name="Eychenie S."/>
            <person name="Kandassamy Y."/>
            <person name="Chantal I."/>
            <person name="Bensaid A."/>
            <person name="Coissac E."/>
            <person name="Vachiery N."/>
            <person name="Demaille J."/>
            <person name="Martinez D."/>
        </authorList>
    </citation>
    <scope>NUCLEOTIDE SEQUENCE [LARGE SCALE GENOMIC DNA]</scope>
    <source>
        <strain>Welgevonden</strain>
    </source>
</reference>
<name>EFP_EHRRW</name>
<gene>
    <name evidence="1" type="primary">efp</name>
    <name type="ordered locus">Erum3190</name>
    <name type="ordered locus">ERWE_CDS_03240</name>
</gene>
<dbReference type="EMBL" id="CR767821">
    <property type="protein sequence ID" value="CAH58038.1"/>
    <property type="molecule type" value="Genomic_DNA"/>
</dbReference>
<dbReference type="EMBL" id="CR925678">
    <property type="protein sequence ID" value="CAI26818.1"/>
    <property type="molecule type" value="Genomic_DNA"/>
</dbReference>
<dbReference type="RefSeq" id="WP_011154999.1">
    <property type="nucleotide sequence ID" value="NC_005295.2"/>
</dbReference>
<dbReference type="SMR" id="Q5HBL2"/>
<dbReference type="GeneID" id="33057848"/>
<dbReference type="KEGG" id="eru:Erum3190"/>
<dbReference type="KEGG" id="erw:ERWE_CDS_03240"/>
<dbReference type="eggNOG" id="COG0231">
    <property type="taxonomic scope" value="Bacteria"/>
</dbReference>
<dbReference type="HOGENOM" id="CLU_074944_1_1_5"/>
<dbReference type="UniPathway" id="UPA00345"/>
<dbReference type="Proteomes" id="UP000001021">
    <property type="component" value="Chromosome"/>
</dbReference>
<dbReference type="GO" id="GO:0005737">
    <property type="term" value="C:cytoplasm"/>
    <property type="evidence" value="ECO:0007669"/>
    <property type="project" value="UniProtKB-SubCell"/>
</dbReference>
<dbReference type="GO" id="GO:0003746">
    <property type="term" value="F:translation elongation factor activity"/>
    <property type="evidence" value="ECO:0007669"/>
    <property type="project" value="UniProtKB-UniRule"/>
</dbReference>
<dbReference type="GO" id="GO:0043043">
    <property type="term" value="P:peptide biosynthetic process"/>
    <property type="evidence" value="ECO:0007669"/>
    <property type="project" value="InterPro"/>
</dbReference>
<dbReference type="FunFam" id="2.40.50.140:FF:000004">
    <property type="entry name" value="Elongation factor P"/>
    <property type="match status" value="1"/>
</dbReference>
<dbReference type="FunFam" id="2.40.50.140:FF:000009">
    <property type="entry name" value="Elongation factor P"/>
    <property type="match status" value="1"/>
</dbReference>
<dbReference type="Gene3D" id="2.30.30.30">
    <property type="match status" value="1"/>
</dbReference>
<dbReference type="Gene3D" id="2.40.50.140">
    <property type="entry name" value="Nucleic acid-binding proteins"/>
    <property type="match status" value="2"/>
</dbReference>
<dbReference type="HAMAP" id="MF_00141">
    <property type="entry name" value="EF_P"/>
    <property type="match status" value="1"/>
</dbReference>
<dbReference type="InterPro" id="IPR015365">
    <property type="entry name" value="Elong-fact-P_C"/>
</dbReference>
<dbReference type="InterPro" id="IPR012340">
    <property type="entry name" value="NA-bd_OB-fold"/>
</dbReference>
<dbReference type="InterPro" id="IPR014722">
    <property type="entry name" value="Rib_uL2_dom2"/>
</dbReference>
<dbReference type="InterPro" id="IPR020599">
    <property type="entry name" value="Transl_elong_fac_P/YeiP"/>
</dbReference>
<dbReference type="InterPro" id="IPR013185">
    <property type="entry name" value="Transl_elong_KOW-like"/>
</dbReference>
<dbReference type="InterPro" id="IPR001059">
    <property type="entry name" value="Transl_elong_P/YeiP_cen"/>
</dbReference>
<dbReference type="InterPro" id="IPR011768">
    <property type="entry name" value="Transl_elongation_fac_P"/>
</dbReference>
<dbReference type="InterPro" id="IPR008991">
    <property type="entry name" value="Translation_prot_SH3-like_sf"/>
</dbReference>
<dbReference type="NCBIfam" id="TIGR00038">
    <property type="entry name" value="efp"/>
    <property type="match status" value="1"/>
</dbReference>
<dbReference type="NCBIfam" id="NF001810">
    <property type="entry name" value="PRK00529.1"/>
    <property type="match status" value="1"/>
</dbReference>
<dbReference type="PANTHER" id="PTHR30053">
    <property type="entry name" value="ELONGATION FACTOR P"/>
    <property type="match status" value="1"/>
</dbReference>
<dbReference type="PANTHER" id="PTHR30053:SF14">
    <property type="entry name" value="TRANSLATION ELONGATION FACTOR KOW-LIKE DOMAIN-CONTAINING PROTEIN"/>
    <property type="match status" value="1"/>
</dbReference>
<dbReference type="Pfam" id="PF01132">
    <property type="entry name" value="EFP"/>
    <property type="match status" value="1"/>
</dbReference>
<dbReference type="Pfam" id="PF08207">
    <property type="entry name" value="EFP_N"/>
    <property type="match status" value="1"/>
</dbReference>
<dbReference type="Pfam" id="PF09285">
    <property type="entry name" value="Elong-fact-P_C"/>
    <property type="match status" value="1"/>
</dbReference>
<dbReference type="PIRSF" id="PIRSF005901">
    <property type="entry name" value="EF-P"/>
    <property type="match status" value="1"/>
</dbReference>
<dbReference type="SMART" id="SM01185">
    <property type="entry name" value="EFP"/>
    <property type="match status" value="1"/>
</dbReference>
<dbReference type="SMART" id="SM00841">
    <property type="entry name" value="Elong-fact-P_C"/>
    <property type="match status" value="1"/>
</dbReference>
<dbReference type="SUPFAM" id="SSF50249">
    <property type="entry name" value="Nucleic acid-binding proteins"/>
    <property type="match status" value="2"/>
</dbReference>
<dbReference type="SUPFAM" id="SSF50104">
    <property type="entry name" value="Translation proteins SH3-like domain"/>
    <property type="match status" value="1"/>
</dbReference>
<accession>Q5HBL2</accession>
<accession>Q5FEA4</accession>
<evidence type="ECO:0000255" key="1">
    <source>
        <dbReference type="HAMAP-Rule" id="MF_00141"/>
    </source>
</evidence>
<feature type="chain" id="PRO_1000010740" description="Elongation factor P">
    <location>
        <begin position="1"/>
        <end position="189"/>
    </location>
</feature>
<protein>
    <recommendedName>
        <fullName evidence="1">Elongation factor P</fullName>
        <shortName evidence="1">EF-P</shortName>
    </recommendedName>
</protein>
<organism>
    <name type="scientific">Ehrlichia ruminantium (strain Welgevonden)</name>
    <dbReference type="NCBI Taxonomy" id="254945"/>
    <lineage>
        <taxon>Bacteria</taxon>
        <taxon>Pseudomonadati</taxon>
        <taxon>Pseudomonadota</taxon>
        <taxon>Alphaproteobacteria</taxon>
        <taxon>Rickettsiales</taxon>
        <taxon>Anaplasmataceae</taxon>
        <taxon>Ehrlichia</taxon>
    </lineage>
</organism>
<sequence length="189" mass="21391">MAERGSDIRPGYVLEHNNALYLVVKIMHTQPGKGGAYIQAEMKNLKTGAKQYERFRADGDIKRAILDEADYQYIYGDDSMLTVMHLGNYEQITIKKDILGDKSIYLKDNMVITLLSYNGEIISAKVPDYVTLQVIETEAVIKGQTVSSSSYKVAMLENNQRINVPTFIKSGDKIVVYTPDDSYYERAKE</sequence>
<comment type="function">
    <text evidence="1">Involved in peptide bond synthesis. Stimulates efficient translation and peptide-bond synthesis on native or reconstituted 70S ribosomes in vitro. Probably functions indirectly by altering the affinity of the ribosome for aminoacyl-tRNA, thus increasing their reactivity as acceptors for peptidyl transferase.</text>
</comment>
<comment type="pathway">
    <text evidence="1">Protein biosynthesis; polypeptide chain elongation.</text>
</comment>
<comment type="subcellular location">
    <subcellularLocation>
        <location evidence="1">Cytoplasm</location>
    </subcellularLocation>
</comment>
<comment type="similarity">
    <text evidence="1">Belongs to the elongation factor P family.</text>
</comment>
<keyword id="KW-0963">Cytoplasm</keyword>
<keyword id="KW-0251">Elongation factor</keyword>
<keyword id="KW-0648">Protein biosynthesis</keyword>